<accession>P66295</accession>
<accession>Q9JQV0</accession>
<gene>
    <name evidence="1" type="primary">rpmJ2</name>
    <name type="ordered locus">NMB0941</name>
</gene>
<organism>
    <name type="scientific">Neisseria meningitidis serogroup B (strain ATCC BAA-335 / MC58)</name>
    <dbReference type="NCBI Taxonomy" id="122586"/>
    <lineage>
        <taxon>Bacteria</taxon>
        <taxon>Pseudomonadati</taxon>
        <taxon>Pseudomonadota</taxon>
        <taxon>Betaproteobacteria</taxon>
        <taxon>Neisseriales</taxon>
        <taxon>Neisseriaceae</taxon>
        <taxon>Neisseria</taxon>
    </lineage>
</organism>
<comment type="similarity">
    <text evidence="1">Belongs to the bacterial ribosomal protein bL36 family.</text>
</comment>
<protein>
    <recommendedName>
        <fullName evidence="1">Large ribosomal subunit protein bL36B</fullName>
    </recommendedName>
    <alternativeName>
        <fullName evidence="2">50S ribosomal protein L36 2</fullName>
    </alternativeName>
</protein>
<sequence length="41" mass="4943">MQVLSSLKTAKQRHRDCQIVRRRGKVYVICKSNPRFKARQR</sequence>
<feature type="chain" id="PRO_0000126226" description="Large ribosomal subunit protein bL36B">
    <location>
        <begin position="1"/>
        <end position="41"/>
    </location>
</feature>
<name>RL362_NEIMB</name>
<reference key="1">
    <citation type="journal article" date="2000" name="Science">
        <title>Complete genome sequence of Neisseria meningitidis serogroup B strain MC58.</title>
        <authorList>
            <person name="Tettelin H."/>
            <person name="Saunders N.J."/>
            <person name="Heidelberg J.F."/>
            <person name="Jeffries A.C."/>
            <person name="Nelson K.E."/>
            <person name="Eisen J.A."/>
            <person name="Ketchum K.A."/>
            <person name="Hood D.W."/>
            <person name="Peden J.F."/>
            <person name="Dodson R.J."/>
            <person name="Nelson W.C."/>
            <person name="Gwinn M.L."/>
            <person name="DeBoy R.T."/>
            <person name="Peterson J.D."/>
            <person name="Hickey E.K."/>
            <person name="Haft D.H."/>
            <person name="Salzberg S.L."/>
            <person name="White O."/>
            <person name="Fleischmann R.D."/>
            <person name="Dougherty B.A."/>
            <person name="Mason T.M."/>
            <person name="Ciecko A."/>
            <person name="Parksey D.S."/>
            <person name="Blair E."/>
            <person name="Cittone H."/>
            <person name="Clark E.B."/>
            <person name="Cotton M.D."/>
            <person name="Utterback T.R."/>
            <person name="Khouri H.M."/>
            <person name="Qin H."/>
            <person name="Vamathevan J.J."/>
            <person name="Gill J."/>
            <person name="Scarlato V."/>
            <person name="Masignani V."/>
            <person name="Pizza M."/>
            <person name="Grandi G."/>
            <person name="Sun L."/>
            <person name="Smith H.O."/>
            <person name="Fraser C.M."/>
            <person name="Moxon E.R."/>
            <person name="Rappuoli R."/>
            <person name="Venter J.C."/>
        </authorList>
    </citation>
    <scope>NUCLEOTIDE SEQUENCE [LARGE SCALE GENOMIC DNA]</scope>
    <source>
        <strain>ATCC BAA-335 / MC58</strain>
    </source>
</reference>
<dbReference type="EMBL" id="AE002098">
    <property type="protein sequence ID" value="AAF41347.1"/>
    <property type="molecule type" value="Genomic_DNA"/>
</dbReference>
<dbReference type="PIR" id="B81140">
    <property type="entry name" value="B81140"/>
</dbReference>
<dbReference type="RefSeq" id="NP_273979.1">
    <property type="nucleotide sequence ID" value="NC_003112.2"/>
</dbReference>
<dbReference type="SMR" id="P66295"/>
<dbReference type="FunCoup" id="P66295">
    <property type="interactions" value="58"/>
</dbReference>
<dbReference type="STRING" id="122586.NMB0941"/>
<dbReference type="PaxDb" id="122586-NMB0941"/>
<dbReference type="KEGG" id="nme:NMB0941"/>
<dbReference type="PATRIC" id="fig|122586.8.peg.1196"/>
<dbReference type="HOGENOM" id="CLU_135723_3_3_4"/>
<dbReference type="InParanoid" id="P66295"/>
<dbReference type="OrthoDB" id="9802520at2"/>
<dbReference type="Proteomes" id="UP000000425">
    <property type="component" value="Chromosome"/>
</dbReference>
<dbReference type="GO" id="GO:1990904">
    <property type="term" value="C:ribonucleoprotein complex"/>
    <property type="evidence" value="ECO:0007669"/>
    <property type="project" value="UniProtKB-KW"/>
</dbReference>
<dbReference type="GO" id="GO:0005840">
    <property type="term" value="C:ribosome"/>
    <property type="evidence" value="ECO:0007669"/>
    <property type="project" value="UniProtKB-KW"/>
</dbReference>
<dbReference type="GO" id="GO:0003735">
    <property type="term" value="F:structural constituent of ribosome"/>
    <property type="evidence" value="ECO:0007669"/>
    <property type="project" value="InterPro"/>
</dbReference>
<dbReference type="GO" id="GO:0006412">
    <property type="term" value="P:translation"/>
    <property type="evidence" value="ECO:0007669"/>
    <property type="project" value="UniProtKB-UniRule"/>
</dbReference>
<dbReference type="HAMAP" id="MF_00251">
    <property type="entry name" value="Ribosomal_bL36"/>
    <property type="match status" value="1"/>
</dbReference>
<dbReference type="InterPro" id="IPR000473">
    <property type="entry name" value="Ribosomal_bL36"/>
</dbReference>
<dbReference type="InterPro" id="IPR035977">
    <property type="entry name" value="Ribosomal_bL36_sp"/>
</dbReference>
<dbReference type="InterPro" id="IPR047621">
    <property type="entry name" value="Ribosomal_L36_bact"/>
</dbReference>
<dbReference type="NCBIfam" id="NF002021">
    <property type="entry name" value="PRK00831.1"/>
    <property type="match status" value="1"/>
</dbReference>
<dbReference type="NCBIfam" id="TIGR01022">
    <property type="entry name" value="rpmJ_bact"/>
    <property type="match status" value="1"/>
</dbReference>
<dbReference type="PANTHER" id="PTHR47781">
    <property type="entry name" value="50S RIBOSOMAL PROTEIN L36 2"/>
    <property type="match status" value="1"/>
</dbReference>
<dbReference type="PANTHER" id="PTHR47781:SF1">
    <property type="entry name" value="LARGE RIBOSOMAL SUBUNIT PROTEIN BL36B"/>
    <property type="match status" value="1"/>
</dbReference>
<dbReference type="Pfam" id="PF00444">
    <property type="entry name" value="Ribosomal_L36"/>
    <property type="match status" value="1"/>
</dbReference>
<dbReference type="SUPFAM" id="SSF57840">
    <property type="entry name" value="Ribosomal protein L36"/>
    <property type="match status" value="1"/>
</dbReference>
<dbReference type="PROSITE" id="PS00828">
    <property type="entry name" value="RIBOSOMAL_L36"/>
    <property type="match status" value="1"/>
</dbReference>
<keyword id="KW-1185">Reference proteome</keyword>
<keyword id="KW-0687">Ribonucleoprotein</keyword>
<keyword id="KW-0689">Ribosomal protein</keyword>
<proteinExistence type="inferred from homology"/>
<evidence type="ECO:0000255" key="1">
    <source>
        <dbReference type="HAMAP-Rule" id="MF_00251"/>
    </source>
</evidence>
<evidence type="ECO:0000305" key="2"/>